<reference key="1">
    <citation type="journal article" date="1995" name="Science">
        <title>Whole-genome random sequencing and assembly of Haemophilus influenzae Rd.</title>
        <authorList>
            <person name="Fleischmann R.D."/>
            <person name="Adams M.D."/>
            <person name="White O."/>
            <person name="Clayton R.A."/>
            <person name="Kirkness E.F."/>
            <person name="Kerlavage A.R."/>
            <person name="Bult C.J."/>
            <person name="Tomb J.-F."/>
            <person name="Dougherty B.A."/>
            <person name="Merrick J.M."/>
            <person name="McKenney K."/>
            <person name="Sutton G.G."/>
            <person name="FitzHugh W."/>
            <person name="Fields C.A."/>
            <person name="Gocayne J.D."/>
            <person name="Scott J.D."/>
            <person name="Shirley R."/>
            <person name="Liu L.-I."/>
            <person name="Glodek A."/>
            <person name="Kelley J.M."/>
            <person name="Weidman J.F."/>
            <person name="Phillips C.A."/>
            <person name="Spriggs T."/>
            <person name="Hedblom E."/>
            <person name="Cotton M.D."/>
            <person name="Utterback T.R."/>
            <person name="Hanna M.C."/>
            <person name="Nguyen D.T."/>
            <person name="Saudek D.M."/>
            <person name="Brandon R.C."/>
            <person name="Fine L.D."/>
            <person name="Fritchman J.L."/>
            <person name="Fuhrmann J.L."/>
            <person name="Geoghagen N.S.M."/>
            <person name="Gnehm C.L."/>
            <person name="McDonald L.A."/>
            <person name="Small K.V."/>
            <person name="Fraser C.M."/>
            <person name="Smith H.O."/>
            <person name="Venter J.C."/>
        </authorList>
    </citation>
    <scope>NUCLEOTIDE SEQUENCE [LARGE SCALE GENOMIC DNA]</scope>
    <source>
        <strain>ATCC 51907 / DSM 11121 / KW20 / Rd</strain>
    </source>
</reference>
<reference key="2">
    <citation type="journal article" date="1997" name="Protein Expr. Purif.">
        <title>Expression, purification, and functional analysis of the TyrR protein of Haemophilus influenzae.</title>
        <authorList>
            <person name="Zhu Q."/>
            <person name="Zhao S."/>
            <person name="Somerville R.L."/>
        </authorList>
    </citation>
    <scope>PROTEIN SEQUENCE OF 2-7</scope>
    <scope>FUNCTION</scope>
    <scope>ACTIVITY REGULATION</scope>
    <scope>SUBUNIT</scope>
</reference>
<reference key="3">
    <citation type="journal article" date="2001" name="Protein Sci.">
        <title>Solution structure of the DNA-binding domain of the TyrR protein of Haemophilus influenzae.</title>
        <authorList>
            <person name="Wang Y."/>
            <person name="Zhao S."/>
            <person name="Somerville R.L."/>
            <person name="Jardetzky O."/>
        </authorList>
    </citation>
    <scope>STRUCTURE BY NMR OF 258-318</scope>
</reference>
<sequence length="318" mass="35954">MTISKFNPQKPFECFIVQSEAMKSAVENAKRFAMFDAPLLIQGETGSGKDLLAKACHYQSLRRDKKFIAVNCAGLPDEDAESEMFGRKVGDSETIGFFEYANKGTVLLDGIAELSLSLQAKLLRFLTDGSFRRVGEEKEHYANVRVICTSQVPLHLLVEQGKVRADLFHRLNVLTINVPALRDRMADIEPLAQGFLQEISEELKIAKPTFDKDFLLYLQKYDWKGNVRELYNTLYRACSLVQDNHLTIESLNLALPQSAVISLDEFENKTLDEIIGFYEAQVLKLFYAEYPSTRKLAQRLGVSHTAIANKLKQYGIGK</sequence>
<feature type="chain" id="PRO_0000081343" description="HTH-type transcriptional regulatory protein TyrR">
    <location>
        <begin position="1"/>
        <end position="318"/>
    </location>
</feature>
<feature type="domain" description="Sigma-54 factor interaction; truncated" evidence="2">
    <location>
        <begin position="15"/>
        <end position="239"/>
    </location>
</feature>
<feature type="DNA-binding region" description="H-T-H motif" evidence="1">
    <location>
        <begin position="292"/>
        <end position="312"/>
    </location>
</feature>
<feature type="binding site" evidence="2">
    <location>
        <begin position="43"/>
        <end position="50"/>
    </location>
    <ligand>
        <name>ATP</name>
        <dbReference type="ChEBI" id="CHEBI:30616"/>
    </ligand>
</feature>
<feature type="binding site" evidence="2">
    <location>
        <begin position="101"/>
        <end position="110"/>
    </location>
    <ligand>
        <name>ATP</name>
        <dbReference type="ChEBI" id="CHEBI:30616"/>
    </ligand>
</feature>
<feature type="strand" evidence="7">
    <location>
        <begin position="271"/>
        <end position="274"/>
    </location>
</feature>
<feature type="helix" evidence="7">
    <location>
        <begin position="277"/>
        <end position="289"/>
    </location>
</feature>
<feature type="helix" evidence="7">
    <location>
        <begin position="293"/>
        <end position="299"/>
    </location>
</feature>
<feature type="helix" evidence="7">
    <location>
        <begin position="305"/>
        <end position="312"/>
    </location>
</feature>
<feature type="turn" evidence="7">
    <location>
        <begin position="313"/>
        <end position="315"/>
    </location>
</feature>
<gene>
    <name evidence="4" type="primary">tyrR</name>
    <name type="ordered locus">HI_0410</name>
</gene>
<proteinExistence type="evidence at protein level"/>
<keyword id="KW-0002">3D-structure</keyword>
<keyword id="KW-0058">Aromatic hydrocarbons catabolism</keyword>
<keyword id="KW-0067">ATP-binding</keyword>
<keyword id="KW-0963">Cytoplasm</keyword>
<keyword id="KW-0903">Direct protein sequencing</keyword>
<keyword id="KW-0238">DNA-binding</keyword>
<keyword id="KW-0547">Nucleotide-binding</keyword>
<keyword id="KW-1185">Reference proteome</keyword>
<keyword id="KW-0678">Repressor</keyword>
<keyword id="KW-0804">Transcription</keyword>
<keyword id="KW-0805">Transcription regulation</keyword>
<name>TYRR_HAEIN</name>
<dbReference type="EMBL" id="L42023">
    <property type="protein sequence ID" value="AAC22069.1"/>
    <property type="molecule type" value="Genomic_DNA"/>
</dbReference>
<dbReference type="PIR" id="C64066">
    <property type="entry name" value="C64066"/>
</dbReference>
<dbReference type="RefSeq" id="NP_438572.1">
    <property type="nucleotide sequence ID" value="NC_000907.1"/>
</dbReference>
<dbReference type="PDB" id="1G2H">
    <property type="method" value="NMR"/>
    <property type="chains" value="A=258-318"/>
</dbReference>
<dbReference type="PDBsum" id="1G2H"/>
<dbReference type="BMRB" id="P44694"/>
<dbReference type="SMR" id="P44694"/>
<dbReference type="STRING" id="71421.HI_0410"/>
<dbReference type="EnsemblBacteria" id="AAC22069">
    <property type="protein sequence ID" value="AAC22069"/>
    <property type="gene ID" value="HI_0410"/>
</dbReference>
<dbReference type="KEGG" id="hin:HI_0410"/>
<dbReference type="PATRIC" id="fig|71421.8.peg.429"/>
<dbReference type="eggNOG" id="COG3283">
    <property type="taxonomic scope" value="Bacteria"/>
</dbReference>
<dbReference type="HOGENOM" id="CLU_000445_0_7_6"/>
<dbReference type="OrthoDB" id="9804019at2"/>
<dbReference type="PhylomeDB" id="P44694"/>
<dbReference type="BioCyc" id="HINF71421:G1GJ1-425-MONOMER"/>
<dbReference type="EvolutionaryTrace" id="P44694"/>
<dbReference type="Proteomes" id="UP000000579">
    <property type="component" value="Chromosome"/>
</dbReference>
<dbReference type="GO" id="GO:0005737">
    <property type="term" value="C:cytoplasm"/>
    <property type="evidence" value="ECO:0007669"/>
    <property type="project" value="UniProtKB-SubCell"/>
</dbReference>
<dbReference type="GO" id="GO:0032993">
    <property type="term" value="C:protein-DNA complex"/>
    <property type="evidence" value="ECO:0000318"/>
    <property type="project" value="GO_Central"/>
</dbReference>
<dbReference type="GO" id="GO:0005524">
    <property type="term" value="F:ATP binding"/>
    <property type="evidence" value="ECO:0007669"/>
    <property type="project" value="UniProtKB-KW"/>
</dbReference>
<dbReference type="GO" id="GO:0016887">
    <property type="term" value="F:ATP hydrolysis activity"/>
    <property type="evidence" value="ECO:0007669"/>
    <property type="project" value="InterPro"/>
</dbReference>
<dbReference type="GO" id="GO:0000987">
    <property type="term" value="F:cis-regulatory region sequence-specific DNA binding"/>
    <property type="evidence" value="ECO:0000318"/>
    <property type="project" value="GO_Central"/>
</dbReference>
<dbReference type="GO" id="GO:0001216">
    <property type="term" value="F:DNA-binding transcription activator activity"/>
    <property type="evidence" value="ECO:0000318"/>
    <property type="project" value="GO_Central"/>
</dbReference>
<dbReference type="GO" id="GO:0009056">
    <property type="term" value="P:catabolic process"/>
    <property type="evidence" value="ECO:0007669"/>
    <property type="project" value="UniProtKB-KW"/>
</dbReference>
<dbReference type="GO" id="GO:0045893">
    <property type="term" value="P:positive regulation of DNA-templated transcription"/>
    <property type="evidence" value="ECO:0000318"/>
    <property type="project" value="GO_Central"/>
</dbReference>
<dbReference type="CDD" id="cd00009">
    <property type="entry name" value="AAA"/>
    <property type="match status" value="1"/>
</dbReference>
<dbReference type="FunFam" id="3.40.50.300:FF:000006">
    <property type="entry name" value="DNA-binding transcriptional regulator NtrC"/>
    <property type="match status" value="1"/>
</dbReference>
<dbReference type="Gene3D" id="1.10.8.60">
    <property type="match status" value="1"/>
</dbReference>
<dbReference type="Gene3D" id="1.10.10.60">
    <property type="entry name" value="Homeodomain-like"/>
    <property type="match status" value="1"/>
</dbReference>
<dbReference type="Gene3D" id="3.40.50.300">
    <property type="entry name" value="P-loop containing nucleotide triphosphate hydrolases"/>
    <property type="match status" value="1"/>
</dbReference>
<dbReference type="InterPro" id="IPR003593">
    <property type="entry name" value="AAA+_ATPase"/>
</dbReference>
<dbReference type="InterPro" id="IPR009057">
    <property type="entry name" value="Homeodomain-like_sf"/>
</dbReference>
<dbReference type="InterPro" id="IPR030828">
    <property type="entry name" value="HTH_TyrR"/>
</dbReference>
<dbReference type="InterPro" id="IPR027417">
    <property type="entry name" value="P-loop_NTPase"/>
</dbReference>
<dbReference type="InterPro" id="IPR002078">
    <property type="entry name" value="Sigma_54_int"/>
</dbReference>
<dbReference type="InterPro" id="IPR025662">
    <property type="entry name" value="Sigma_54_int_dom_ATP-bd_1"/>
</dbReference>
<dbReference type="NCBIfam" id="TIGR04381">
    <property type="entry name" value="HTH_TypR"/>
    <property type="match status" value="1"/>
</dbReference>
<dbReference type="PANTHER" id="PTHR32071:SF3">
    <property type="entry name" value="HTH-TYPE TRANSCRIPTIONAL REGULATORY PROTEIN TYRR"/>
    <property type="match status" value="1"/>
</dbReference>
<dbReference type="PANTHER" id="PTHR32071">
    <property type="entry name" value="TRANSCRIPTIONAL REGULATORY PROTEIN"/>
    <property type="match status" value="1"/>
</dbReference>
<dbReference type="Pfam" id="PF18024">
    <property type="entry name" value="HTH_50"/>
    <property type="match status" value="1"/>
</dbReference>
<dbReference type="Pfam" id="PF00158">
    <property type="entry name" value="Sigma54_activat"/>
    <property type="match status" value="1"/>
</dbReference>
<dbReference type="SMART" id="SM00382">
    <property type="entry name" value="AAA"/>
    <property type="match status" value="1"/>
</dbReference>
<dbReference type="SUPFAM" id="SSF46689">
    <property type="entry name" value="Homeodomain-like"/>
    <property type="match status" value="1"/>
</dbReference>
<dbReference type="SUPFAM" id="SSF52540">
    <property type="entry name" value="P-loop containing nucleoside triphosphate hydrolases"/>
    <property type="match status" value="1"/>
</dbReference>
<dbReference type="PROSITE" id="PS00675">
    <property type="entry name" value="SIGMA54_INTERACT_1"/>
    <property type="match status" value="1"/>
</dbReference>
<dbReference type="PROSITE" id="PS50045">
    <property type="entry name" value="SIGMA54_INTERACT_4"/>
    <property type="match status" value="1"/>
</dbReference>
<protein>
    <recommendedName>
        <fullName evidence="5">HTH-type transcriptional regulatory protein TyrR</fullName>
    </recommendedName>
</protein>
<evidence type="ECO:0000250" key="1">
    <source>
        <dbReference type="UniProtKB" id="P07604"/>
    </source>
</evidence>
<evidence type="ECO:0000255" key="2">
    <source>
        <dbReference type="PROSITE-ProRule" id="PRU00193"/>
    </source>
</evidence>
<evidence type="ECO:0000269" key="3">
    <source>
    </source>
</evidence>
<evidence type="ECO:0000303" key="4">
    <source>
    </source>
</evidence>
<evidence type="ECO:0000305" key="5"/>
<evidence type="ECO:0000305" key="6">
    <source>
    </source>
</evidence>
<evidence type="ECO:0007829" key="7">
    <source>
        <dbReference type="PDB" id="1G2H"/>
    </source>
</evidence>
<comment type="function">
    <text evidence="1 3">Transcriptional regulator of the TyrR regulon, which includes a number of genes coding for proteins involved in the biosynthesis or transport of the three aromatic amino acids, phenylalanine, tyrosine and tryptophan. These three aromatic amino acids act as effectors which bind to the TyrR protein to form an active regulatory protein (By similarity). Acts by binding specifically to TyrR boxes in the promoter region of the target genes (PubMed:9226720). Can efficiently repress the transcription of the aroF promoter, but lacks the ability to function as a transcriptional activator (PubMed:9226720).</text>
</comment>
<comment type="activity regulation">
    <text evidence="3">The DNA binding ability is drastically reduced in the presence of ATP. Tyrosine further reduces the binding affinity of TyrR in the presence of ATP.</text>
</comment>
<comment type="subunit">
    <text evidence="1 3">Homodimer (PubMed:9226720). In presence of tyrosine (or high concentrations of phenylalanine or tryptophan) and ATP, it self-associates to form a hexamer (By similarity).</text>
</comment>
<comment type="subcellular location">
    <subcellularLocation>
        <location evidence="5">Cytoplasm</location>
    </subcellularLocation>
</comment>
<comment type="caution">
    <text evidence="6">Lacks a counterpart to the N-terminal domain of the TyrR protein of E.coli.</text>
</comment>
<organism>
    <name type="scientific">Haemophilus influenzae (strain ATCC 51907 / DSM 11121 / KW20 / Rd)</name>
    <dbReference type="NCBI Taxonomy" id="71421"/>
    <lineage>
        <taxon>Bacteria</taxon>
        <taxon>Pseudomonadati</taxon>
        <taxon>Pseudomonadota</taxon>
        <taxon>Gammaproteobacteria</taxon>
        <taxon>Pasteurellales</taxon>
        <taxon>Pasteurellaceae</taxon>
        <taxon>Haemophilus</taxon>
    </lineage>
</organism>
<accession>P44694</accession>